<sequence>MFRIGQGYDAHRFKEGDHIVLCGVKIPFGRGFAAHSDGDVALHALCDALLGAAALGDIGRHFPDTDARYKGIDSRVLLREVRQRIASLGYTVGNVDVTVVAQAPRLAAHIQAMRENLAQDLEIPPDCVNVKATTTEGMGFEGRGEGISAHAVALLARR</sequence>
<feature type="chain" id="PRO_0000189480" description="2-C-methyl-D-erythritol 2,4-cyclodiphosphate synthase">
    <location>
        <begin position="1"/>
        <end position="158"/>
    </location>
</feature>
<feature type="binding site" evidence="1">
    <location>
        <begin position="9"/>
        <end position="11"/>
    </location>
    <ligand>
        <name>4-CDP-2-C-methyl-D-erythritol 2-phosphate</name>
        <dbReference type="ChEBI" id="CHEBI:57919"/>
    </ligand>
</feature>
<feature type="binding site" evidence="1">
    <location>
        <position position="9"/>
    </location>
    <ligand>
        <name>a divalent metal cation</name>
        <dbReference type="ChEBI" id="CHEBI:60240"/>
    </ligand>
</feature>
<feature type="binding site" evidence="1">
    <location>
        <position position="11"/>
    </location>
    <ligand>
        <name>a divalent metal cation</name>
        <dbReference type="ChEBI" id="CHEBI:60240"/>
    </ligand>
</feature>
<feature type="binding site" evidence="1">
    <location>
        <begin position="35"/>
        <end position="36"/>
    </location>
    <ligand>
        <name>4-CDP-2-C-methyl-D-erythritol 2-phosphate</name>
        <dbReference type="ChEBI" id="CHEBI:57919"/>
    </ligand>
</feature>
<feature type="binding site" evidence="1">
    <location>
        <position position="43"/>
    </location>
    <ligand>
        <name>a divalent metal cation</name>
        <dbReference type="ChEBI" id="CHEBI:60240"/>
    </ligand>
</feature>
<feature type="binding site" evidence="1">
    <location>
        <begin position="57"/>
        <end position="59"/>
    </location>
    <ligand>
        <name>4-CDP-2-C-methyl-D-erythritol 2-phosphate</name>
        <dbReference type="ChEBI" id="CHEBI:57919"/>
    </ligand>
</feature>
<feature type="binding site" evidence="1">
    <location>
        <begin position="62"/>
        <end position="66"/>
    </location>
    <ligand>
        <name>4-CDP-2-C-methyl-D-erythritol 2-phosphate</name>
        <dbReference type="ChEBI" id="CHEBI:57919"/>
    </ligand>
</feature>
<feature type="binding site" evidence="1">
    <location>
        <begin position="133"/>
        <end position="136"/>
    </location>
    <ligand>
        <name>4-CDP-2-C-methyl-D-erythritol 2-phosphate</name>
        <dbReference type="ChEBI" id="CHEBI:57919"/>
    </ligand>
</feature>
<feature type="binding site" evidence="1">
    <location>
        <position position="140"/>
    </location>
    <ligand>
        <name>4-CDP-2-C-methyl-D-erythritol 2-phosphate</name>
        <dbReference type="ChEBI" id="CHEBI:57919"/>
    </ligand>
</feature>
<feature type="binding site" evidence="1">
    <location>
        <position position="143"/>
    </location>
    <ligand>
        <name>4-CDP-2-C-methyl-D-erythritol 2-phosphate</name>
        <dbReference type="ChEBI" id="CHEBI:57919"/>
    </ligand>
</feature>
<feature type="site" description="Transition state stabilizer" evidence="1">
    <location>
        <position position="35"/>
    </location>
</feature>
<feature type="site" description="Transition state stabilizer" evidence="1">
    <location>
        <position position="134"/>
    </location>
</feature>
<keyword id="KW-0414">Isoprene biosynthesis</keyword>
<keyword id="KW-0456">Lyase</keyword>
<keyword id="KW-0479">Metal-binding</keyword>
<keyword id="KW-1185">Reference proteome</keyword>
<gene>
    <name evidence="1" type="primary">ispF</name>
    <name type="ordered locus">MCA2518</name>
</gene>
<dbReference type="EC" id="4.6.1.12" evidence="1"/>
<dbReference type="EMBL" id="AE017282">
    <property type="protein sequence ID" value="AAU91326.1"/>
    <property type="molecule type" value="Genomic_DNA"/>
</dbReference>
<dbReference type="RefSeq" id="WP_010961739.1">
    <property type="nucleotide sequence ID" value="NC_002977.6"/>
</dbReference>
<dbReference type="SMR" id="Q604M1"/>
<dbReference type="STRING" id="243233.MCA2518"/>
<dbReference type="GeneID" id="88224714"/>
<dbReference type="KEGG" id="mca:MCA2518"/>
<dbReference type="eggNOG" id="COG0245">
    <property type="taxonomic scope" value="Bacteria"/>
</dbReference>
<dbReference type="HOGENOM" id="CLU_084630_2_0_6"/>
<dbReference type="UniPathway" id="UPA00056">
    <property type="reaction ID" value="UER00095"/>
</dbReference>
<dbReference type="Proteomes" id="UP000006821">
    <property type="component" value="Chromosome"/>
</dbReference>
<dbReference type="GO" id="GO:0008685">
    <property type="term" value="F:2-C-methyl-D-erythritol 2,4-cyclodiphosphate synthase activity"/>
    <property type="evidence" value="ECO:0007669"/>
    <property type="project" value="UniProtKB-UniRule"/>
</dbReference>
<dbReference type="GO" id="GO:0046872">
    <property type="term" value="F:metal ion binding"/>
    <property type="evidence" value="ECO:0007669"/>
    <property type="project" value="UniProtKB-KW"/>
</dbReference>
<dbReference type="GO" id="GO:0019288">
    <property type="term" value="P:isopentenyl diphosphate biosynthetic process, methylerythritol 4-phosphate pathway"/>
    <property type="evidence" value="ECO:0007669"/>
    <property type="project" value="UniProtKB-UniRule"/>
</dbReference>
<dbReference type="GO" id="GO:0016114">
    <property type="term" value="P:terpenoid biosynthetic process"/>
    <property type="evidence" value="ECO:0007669"/>
    <property type="project" value="InterPro"/>
</dbReference>
<dbReference type="CDD" id="cd00554">
    <property type="entry name" value="MECDP_synthase"/>
    <property type="match status" value="1"/>
</dbReference>
<dbReference type="FunFam" id="3.30.1330.50:FF:000001">
    <property type="entry name" value="2-C-methyl-D-erythritol 2,4-cyclodiphosphate synthase"/>
    <property type="match status" value="1"/>
</dbReference>
<dbReference type="Gene3D" id="3.30.1330.50">
    <property type="entry name" value="2-C-methyl-D-erythritol 2,4-cyclodiphosphate synthase"/>
    <property type="match status" value="1"/>
</dbReference>
<dbReference type="HAMAP" id="MF_00107">
    <property type="entry name" value="IspF"/>
    <property type="match status" value="1"/>
</dbReference>
<dbReference type="InterPro" id="IPR003526">
    <property type="entry name" value="MECDP_synthase"/>
</dbReference>
<dbReference type="InterPro" id="IPR020555">
    <property type="entry name" value="MECDP_synthase_CS"/>
</dbReference>
<dbReference type="InterPro" id="IPR036571">
    <property type="entry name" value="MECDP_synthase_sf"/>
</dbReference>
<dbReference type="NCBIfam" id="TIGR00151">
    <property type="entry name" value="ispF"/>
    <property type="match status" value="1"/>
</dbReference>
<dbReference type="PANTHER" id="PTHR43181">
    <property type="entry name" value="2-C-METHYL-D-ERYTHRITOL 2,4-CYCLODIPHOSPHATE SYNTHASE, CHLOROPLASTIC"/>
    <property type="match status" value="1"/>
</dbReference>
<dbReference type="PANTHER" id="PTHR43181:SF1">
    <property type="entry name" value="2-C-METHYL-D-ERYTHRITOL 2,4-CYCLODIPHOSPHATE SYNTHASE, CHLOROPLASTIC"/>
    <property type="match status" value="1"/>
</dbReference>
<dbReference type="Pfam" id="PF02542">
    <property type="entry name" value="YgbB"/>
    <property type="match status" value="1"/>
</dbReference>
<dbReference type="SUPFAM" id="SSF69765">
    <property type="entry name" value="IpsF-like"/>
    <property type="match status" value="1"/>
</dbReference>
<dbReference type="PROSITE" id="PS01350">
    <property type="entry name" value="ISPF"/>
    <property type="match status" value="1"/>
</dbReference>
<proteinExistence type="inferred from homology"/>
<evidence type="ECO:0000255" key="1">
    <source>
        <dbReference type="HAMAP-Rule" id="MF_00107"/>
    </source>
</evidence>
<reference key="1">
    <citation type="journal article" date="2004" name="PLoS Biol.">
        <title>Genomic insights into methanotrophy: the complete genome sequence of Methylococcus capsulatus (Bath).</title>
        <authorList>
            <person name="Ward N.L."/>
            <person name="Larsen O."/>
            <person name="Sakwa J."/>
            <person name="Bruseth L."/>
            <person name="Khouri H.M."/>
            <person name="Durkin A.S."/>
            <person name="Dimitrov G."/>
            <person name="Jiang L."/>
            <person name="Scanlan D."/>
            <person name="Kang K.H."/>
            <person name="Lewis M.R."/>
            <person name="Nelson K.E."/>
            <person name="Methe B.A."/>
            <person name="Wu M."/>
            <person name="Heidelberg J.F."/>
            <person name="Paulsen I.T."/>
            <person name="Fouts D.E."/>
            <person name="Ravel J."/>
            <person name="Tettelin H."/>
            <person name="Ren Q."/>
            <person name="Read T.D."/>
            <person name="DeBoy R.T."/>
            <person name="Seshadri R."/>
            <person name="Salzberg S.L."/>
            <person name="Jensen H.B."/>
            <person name="Birkeland N.K."/>
            <person name="Nelson W.C."/>
            <person name="Dodson R.J."/>
            <person name="Grindhaug S.H."/>
            <person name="Holt I.E."/>
            <person name="Eidhammer I."/>
            <person name="Jonasen I."/>
            <person name="Vanaken S."/>
            <person name="Utterback T.R."/>
            <person name="Feldblyum T.V."/>
            <person name="Fraser C.M."/>
            <person name="Lillehaug J.R."/>
            <person name="Eisen J.A."/>
        </authorList>
    </citation>
    <scope>NUCLEOTIDE SEQUENCE [LARGE SCALE GENOMIC DNA]</scope>
    <source>
        <strain>ATCC 33009 / NCIMB 11132 / Bath</strain>
    </source>
</reference>
<accession>Q604M1</accession>
<organism>
    <name type="scientific">Methylococcus capsulatus (strain ATCC 33009 / NCIMB 11132 / Bath)</name>
    <dbReference type="NCBI Taxonomy" id="243233"/>
    <lineage>
        <taxon>Bacteria</taxon>
        <taxon>Pseudomonadati</taxon>
        <taxon>Pseudomonadota</taxon>
        <taxon>Gammaproteobacteria</taxon>
        <taxon>Methylococcales</taxon>
        <taxon>Methylococcaceae</taxon>
        <taxon>Methylococcus</taxon>
    </lineage>
</organism>
<protein>
    <recommendedName>
        <fullName evidence="1">2-C-methyl-D-erythritol 2,4-cyclodiphosphate synthase</fullName>
        <shortName evidence="1">MECDP-synthase</shortName>
        <shortName evidence="1">MECPP-synthase</shortName>
        <shortName evidence="1">MECPS</shortName>
        <ecNumber evidence="1">4.6.1.12</ecNumber>
    </recommendedName>
</protein>
<name>ISPF_METCA</name>
<comment type="function">
    <text evidence="1">Involved in the biosynthesis of isopentenyl diphosphate (IPP) and dimethylallyl diphosphate (DMAPP), two major building blocks of isoprenoid compounds. Catalyzes the conversion of 4-diphosphocytidyl-2-C-methyl-D-erythritol 2-phosphate (CDP-ME2P) to 2-C-methyl-D-erythritol 2,4-cyclodiphosphate (ME-CPP) with a corresponding release of cytidine 5-monophosphate (CMP).</text>
</comment>
<comment type="catalytic activity">
    <reaction evidence="1">
        <text>4-CDP-2-C-methyl-D-erythritol 2-phosphate = 2-C-methyl-D-erythritol 2,4-cyclic diphosphate + CMP</text>
        <dbReference type="Rhea" id="RHEA:23864"/>
        <dbReference type="ChEBI" id="CHEBI:57919"/>
        <dbReference type="ChEBI" id="CHEBI:58483"/>
        <dbReference type="ChEBI" id="CHEBI:60377"/>
        <dbReference type="EC" id="4.6.1.12"/>
    </reaction>
</comment>
<comment type="cofactor">
    <cofactor evidence="1">
        <name>a divalent metal cation</name>
        <dbReference type="ChEBI" id="CHEBI:60240"/>
    </cofactor>
    <text evidence="1">Binds 1 divalent metal cation per subunit.</text>
</comment>
<comment type="pathway">
    <text evidence="1">Isoprenoid biosynthesis; isopentenyl diphosphate biosynthesis via DXP pathway; isopentenyl diphosphate from 1-deoxy-D-xylulose 5-phosphate: step 4/6.</text>
</comment>
<comment type="subunit">
    <text evidence="1">Homotrimer.</text>
</comment>
<comment type="similarity">
    <text evidence="1">Belongs to the IspF family.</text>
</comment>